<name>MNMA_CORK4</name>
<accession>C4LJJ9</accession>
<comment type="function">
    <text evidence="1">Catalyzes the 2-thiolation of uridine at the wobble position (U34) of tRNA, leading to the formation of s(2)U34.</text>
</comment>
<comment type="catalytic activity">
    <reaction evidence="1">
        <text>S-sulfanyl-L-cysteinyl-[protein] + uridine(34) in tRNA + AH2 + ATP = 2-thiouridine(34) in tRNA + L-cysteinyl-[protein] + A + AMP + diphosphate + H(+)</text>
        <dbReference type="Rhea" id="RHEA:47032"/>
        <dbReference type="Rhea" id="RHEA-COMP:10131"/>
        <dbReference type="Rhea" id="RHEA-COMP:11726"/>
        <dbReference type="Rhea" id="RHEA-COMP:11727"/>
        <dbReference type="Rhea" id="RHEA-COMP:11728"/>
        <dbReference type="ChEBI" id="CHEBI:13193"/>
        <dbReference type="ChEBI" id="CHEBI:15378"/>
        <dbReference type="ChEBI" id="CHEBI:17499"/>
        <dbReference type="ChEBI" id="CHEBI:29950"/>
        <dbReference type="ChEBI" id="CHEBI:30616"/>
        <dbReference type="ChEBI" id="CHEBI:33019"/>
        <dbReference type="ChEBI" id="CHEBI:61963"/>
        <dbReference type="ChEBI" id="CHEBI:65315"/>
        <dbReference type="ChEBI" id="CHEBI:87170"/>
        <dbReference type="ChEBI" id="CHEBI:456215"/>
        <dbReference type="EC" id="2.8.1.13"/>
    </reaction>
</comment>
<comment type="subcellular location">
    <subcellularLocation>
        <location evidence="1">Cytoplasm</location>
    </subcellularLocation>
</comment>
<comment type="similarity">
    <text evidence="1">Belongs to the MnmA/TRMU family.</text>
</comment>
<feature type="chain" id="PRO_1000203302" description="tRNA-specific 2-thiouridylase MnmA">
    <location>
        <begin position="1"/>
        <end position="372"/>
    </location>
</feature>
<feature type="region of interest" description="Interaction with tRNA" evidence="1">
    <location>
        <begin position="143"/>
        <end position="145"/>
    </location>
</feature>
<feature type="active site" description="Nucleophile" evidence="1">
    <location>
        <position position="101"/>
    </location>
</feature>
<feature type="active site" description="Cysteine persulfide intermediate" evidence="1">
    <location>
        <position position="193"/>
    </location>
</feature>
<feature type="binding site" evidence="1">
    <location>
        <begin position="6"/>
        <end position="13"/>
    </location>
    <ligand>
        <name>ATP</name>
        <dbReference type="ChEBI" id="CHEBI:30616"/>
    </ligand>
</feature>
<feature type="binding site" evidence="1">
    <location>
        <position position="32"/>
    </location>
    <ligand>
        <name>ATP</name>
        <dbReference type="ChEBI" id="CHEBI:30616"/>
    </ligand>
</feature>
<feature type="binding site" evidence="1">
    <location>
        <position position="125"/>
    </location>
    <ligand>
        <name>ATP</name>
        <dbReference type="ChEBI" id="CHEBI:30616"/>
    </ligand>
</feature>
<feature type="site" description="Interaction with tRNA" evidence="1">
    <location>
        <position position="126"/>
    </location>
</feature>
<feature type="site" description="Interaction with tRNA" evidence="1">
    <location>
        <position position="332"/>
    </location>
</feature>
<feature type="disulfide bond" description="Alternate" evidence="1">
    <location>
        <begin position="101"/>
        <end position="193"/>
    </location>
</feature>
<organism>
    <name type="scientific">Corynebacterium kroppenstedtii (strain DSM 44385 / JCM 11950 / CIP 105744 / CCUG 35717)</name>
    <dbReference type="NCBI Taxonomy" id="645127"/>
    <lineage>
        <taxon>Bacteria</taxon>
        <taxon>Bacillati</taxon>
        <taxon>Actinomycetota</taxon>
        <taxon>Actinomycetes</taxon>
        <taxon>Mycobacteriales</taxon>
        <taxon>Corynebacteriaceae</taxon>
        <taxon>Corynebacterium</taxon>
    </lineage>
</organism>
<sequence length="372" mass="39606">MRVMAAMSGGVDSSVAAARLVAEGHEVIGVHLALASTPTTLRVGSRGCCSLEDSGDARRVADALGIPFYVWDFSDRFREDVVDPFINSYEMGETPNPCLRCNEKIKFQALLDRGIALGFDAVATGHYARLKDGELRRAIDDNKDQSYVLGVLNDEQLAHCLFPLGDTRKPDIRKEAEAAGLVTASKPDSHDICFIPDGNTKAFLGNHIGVRSGDLKDQDGNVIGHHDGIYGFTIGQRKGLGLPGPAPDGKPRYVTDIDADTGTVTVGTRDDLRVGRLYADRLIRLDEHEGSTQECQVQVRAHGGVVDATVTIDDGVATIDLHSPLTGVARGQAAVIYRPDPDGDIVLGSGTICDTVSVSKLQPTTAGASSNS</sequence>
<keyword id="KW-0067">ATP-binding</keyword>
<keyword id="KW-0963">Cytoplasm</keyword>
<keyword id="KW-1015">Disulfide bond</keyword>
<keyword id="KW-0547">Nucleotide-binding</keyword>
<keyword id="KW-1185">Reference proteome</keyword>
<keyword id="KW-0694">RNA-binding</keyword>
<keyword id="KW-0808">Transferase</keyword>
<keyword id="KW-0819">tRNA processing</keyword>
<keyword id="KW-0820">tRNA-binding</keyword>
<dbReference type="EC" id="2.8.1.13" evidence="1"/>
<dbReference type="EMBL" id="CP001620">
    <property type="protein sequence ID" value="ACR18004.1"/>
    <property type="molecule type" value="Genomic_DNA"/>
</dbReference>
<dbReference type="RefSeq" id="WP_012731891.1">
    <property type="nucleotide sequence ID" value="NC_012704.1"/>
</dbReference>
<dbReference type="SMR" id="C4LJJ9"/>
<dbReference type="STRING" id="645127.ckrop_1260"/>
<dbReference type="KEGG" id="ckp:ckrop_1260"/>
<dbReference type="eggNOG" id="COG0482">
    <property type="taxonomic scope" value="Bacteria"/>
</dbReference>
<dbReference type="HOGENOM" id="CLU_035188_0_2_11"/>
<dbReference type="OrthoDB" id="9800696at2"/>
<dbReference type="Proteomes" id="UP000001473">
    <property type="component" value="Chromosome"/>
</dbReference>
<dbReference type="GO" id="GO:0005737">
    <property type="term" value="C:cytoplasm"/>
    <property type="evidence" value="ECO:0007669"/>
    <property type="project" value="UniProtKB-SubCell"/>
</dbReference>
<dbReference type="GO" id="GO:0005524">
    <property type="term" value="F:ATP binding"/>
    <property type="evidence" value="ECO:0007669"/>
    <property type="project" value="UniProtKB-KW"/>
</dbReference>
<dbReference type="GO" id="GO:0000049">
    <property type="term" value="F:tRNA binding"/>
    <property type="evidence" value="ECO:0007669"/>
    <property type="project" value="UniProtKB-KW"/>
</dbReference>
<dbReference type="GO" id="GO:0103016">
    <property type="term" value="F:tRNA-uridine 2-sulfurtransferase activity"/>
    <property type="evidence" value="ECO:0007669"/>
    <property type="project" value="UniProtKB-EC"/>
</dbReference>
<dbReference type="GO" id="GO:0002143">
    <property type="term" value="P:tRNA wobble position uridine thiolation"/>
    <property type="evidence" value="ECO:0007669"/>
    <property type="project" value="TreeGrafter"/>
</dbReference>
<dbReference type="CDD" id="cd01998">
    <property type="entry name" value="MnmA_TRMU-like"/>
    <property type="match status" value="1"/>
</dbReference>
<dbReference type="FunFam" id="2.30.30.280:FF:000001">
    <property type="entry name" value="tRNA-specific 2-thiouridylase MnmA"/>
    <property type="match status" value="1"/>
</dbReference>
<dbReference type="FunFam" id="3.40.50.620:FF:000057">
    <property type="entry name" value="tRNA-specific 2-thiouridylase MnmA"/>
    <property type="match status" value="1"/>
</dbReference>
<dbReference type="Gene3D" id="2.30.30.280">
    <property type="entry name" value="Adenine nucleotide alpha hydrolases-like domains"/>
    <property type="match status" value="1"/>
</dbReference>
<dbReference type="Gene3D" id="3.40.50.620">
    <property type="entry name" value="HUPs"/>
    <property type="match status" value="1"/>
</dbReference>
<dbReference type="Gene3D" id="2.40.30.10">
    <property type="entry name" value="Translation factors"/>
    <property type="match status" value="1"/>
</dbReference>
<dbReference type="HAMAP" id="MF_00144">
    <property type="entry name" value="tRNA_thiouridyl_MnmA"/>
    <property type="match status" value="1"/>
</dbReference>
<dbReference type="InterPro" id="IPR004506">
    <property type="entry name" value="MnmA-like"/>
</dbReference>
<dbReference type="InterPro" id="IPR046885">
    <property type="entry name" value="MnmA-like_C"/>
</dbReference>
<dbReference type="InterPro" id="IPR046884">
    <property type="entry name" value="MnmA-like_central"/>
</dbReference>
<dbReference type="InterPro" id="IPR023382">
    <property type="entry name" value="MnmA-like_central_sf"/>
</dbReference>
<dbReference type="InterPro" id="IPR014729">
    <property type="entry name" value="Rossmann-like_a/b/a_fold"/>
</dbReference>
<dbReference type="NCBIfam" id="NF001138">
    <property type="entry name" value="PRK00143.1"/>
    <property type="match status" value="1"/>
</dbReference>
<dbReference type="NCBIfam" id="TIGR00420">
    <property type="entry name" value="trmU"/>
    <property type="match status" value="1"/>
</dbReference>
<dbReference type="PANTHER" id="PTHR11933:SF5">
    <property type="entry name" value="MITOCHONDRIAL TRNA-SPECIFIC 2-THIOURIDYLASE 1"/>
    <property type="match status" value="1"/>
</dbReference>
<dbReference type="PANTHER" id="PTHR11933">
    <property type="entry name" value="TRNA 5-METHYLAMINOMETHYL-2-THIOURIDYLATE -METHYLTRANSFERASE"/>
    <property type="match status" value="1"/>
</dbReference>
<dbReference type="Pfam" id="PF03054">
    <property type="entry name" value="tRNA_Me_trans"/>
    <property type="match status" value="1"/>
</dbReference>
<dbReference type="Pfam" id="PF20258">
    <property type="entry name" value="tRNA_Me_trans_C"/>
    <property type="match status" value="1"/>
</dbReference>
<dbReference type="Pfam" id="PF20259">
    <property type="entry name" value="tRNA_Me_trans_M"/>
    <property type="match status" value="1"/>
</dbReference>
<dbReference type="SUPFAM" id="SSF52402">
    <property type="entry name" value="Adenine nucleotide alpha hydrolases-like"/>
    <property type="match status" value="1"/>
</dbReference>
<reference key="1">
    <citation type="journal article" date="2008" name="J. Biotechnol.">
        <title>Ultrafast pyrosequencing of Corynebacterium kroppenstedtii DSM44385 revealed insights into the physiology of a lipophilic corynebacterium that lacks mycolic acids.</title>
        <authorList>
            <person name="Tauch A."/>
            <person name="Schneider J."/>
            <person name="Szczepanowski R."/>
            <person name="Tilker A."/>
            <person name="Viehoever P."/>
            <person name="Gartemann K.-H."/>
            <person name="Arnold W."/>
            <person name="Blom J."/>
            <person name="Brinkrolf K."/>
            <person name="Brune I."/>
            <person name="Goetker S."/>
            <person name="Weisshaar B."/>
            <person name="Goesmann A."/>
            <person name="Droege M."/>
            <person name="Puehler A."/>
        </authorList>
    </citation>
    <scope>NUCLEOTIDE SEQUENCE [LARGE SCALE GENOMIC DNA]</scope>
    <source>
        <strain>DSM 44385 / JCM 11950 / CIP 105744 / CCUG 35717</strain>
    </source>
</reference>
<gene>
    <name evidence="1" type="primary">mnmA</name>
    <name type="ordered locus">ckrop_1260</name>
</gene>
<evidence type="ECO:0000255" key="1">
    <source>
        <dbReference type="HAMAP-Rule" id="MF_00144"/>
    </source>
</evidence>
<proteinExistence type="inferred from homology"/>
<protein>
    <recommendedName>
        <fullName evidence="1">tRNA-specific 2-thiouridylase MnmA</fullName>
        <ecNumber evidence="1">2.8.1.13</ecNumber>
    </recommendedName>
</protein>